<feature type="chain" id="PRO_0000203899" description="DNA-binding protein Fis">
    <location>
        <begin position="1"/>
        <end position="98"/>
    </location>
</feature>
<feature type="DNA-binding region" description="H-T-H motif" evidence="1">
    <location>
        <begin position="74"/>
        <end position="93"/>
    </location>
</feature>
<evidence type="ECO:0000255" key="1">
    <source>
        <dbReference type="HAMAP-Rule" id="MF_00166"/>
    </source>
</evidence>
<evidence type="ECO:0000305" key="2"/>
<reference key="1">
    <citation type="journal article" date="2005" name="Proc. Natl. Acad. Sci. U.S.A.">
        <title>Complete genome sequence of Vibrio fischeri: a symbiotic bacterium with pathogenic congeners.</title>
        <authorList>
            <person name="Ruby E.G."/>
            <person name="Urbanowski M."/>
            <person name="Campbell J."/>
            <person name="Dunn A."/>
            <person name="Faini M."/>
            <person name="Gunsalus R."/>
            <person name="Lostroh P."/>
            <person name="Lupp C."/>
            <person name="McCann J."/>
            <person name="Millikan D."/>
            <person name="Schaefer A."/>
            <person name="Stabb E."/>
            <person name="Stevens A."/>
            <person name="Visick K."/>
            <person name="Whistler C."/>
            <person name="Greenberg E.P."/>
        </authorList>
    </citation>
    <scope>NUCLEOTIDE SEQUENCE [LARGE SCALE GENOMIC DNA]</scope>
    <source>
        <strain>ATCC 700601 / ES114</strain>
    </source>
</reference>
<keyword id="KW-0010">Activator</keyword>
<keyword id="KW-0238">DNA-binding</keyword>
<keyword id="KW-1185">Reference proteome</keyword>
<keyword id="KW-0804">Transcription</keyword>
<keyword id="KW-0805">Transcription regulation</keyword>
<gene>
    <name evidence="1" type="primary">fis</name>
    <name type="ordered locus">VF_2391</name>
</gene>
<sequence length="98" mass="11047">MFDQSMTSEALTVTTVTAQDQITQKPLRDSVKASLKNYLGQLNGQEVNDLYELVLAEVEQPLLDMIMQHTRGNQTKAANMMGINRGTLRKKLKKYGMN</sequence>
<dbReference type="EMBL" id="CP000020">
    <property type="protein sequence ID" value="AAW86886.1"/>
    <property type="status" value="ALT_INIT"/>
    <property type="molecule type" value="Genomic_DNA"/>
</dbReference>
<dbReference type="RefSeq" id="WP_005421285.1">
    <property type="nucleotide sequence ID" value="NZ_CAWLES010000001.1"/>
</dbReference>
<dbReference type="RefSeq" id="YP_205774.1">
    <property type="nucleotide sequence ID" value="NC_006840.2"/>
</dbReference>
<dbReference type="SMR" id="Q5E260"/>
<dbReference type="STRING" id="312309.VF_2391"/>
<dbReference type="EnsemblBacteria" id="AAW86886">
    <property type="protein sequence ID" value="AAW86886"/>
    <property type="gene ID" value="VF_2391"/>
</dbReference>
<dbReference type="GeneID" id="56276516"/>
<dbReference type="KEGG" id="vfi:VF_2391"/>
<dbReference type="PATRIC" id="fig|312309.11.peg.2426"/>
<dbReference type="eggNOG" id="COG2901">
    <property type="taxonomic scope" value="Bacteria"/>
</dbReference>
<dbReference type="HOGENOM" id="CLU_158040_3_0_6"/>
<dbReference type="OrthoDB" id="9802388at2"/>
<dbReference type="Proteomes" id="UP000000537">
    <property type="component" value="Chromosome I"/>
</dbReference>
<dbReference type="GO" id="GO:0003700">
    <property type="term" value="F:DNA-binding transcription factor activity"/>
    <property type="evidence" value="ECO:0007669"/>
    <property type="project" value="UniProtKB-UniRule"/>
</dbReference>
<dbReference type="GO" id="GO:0043565">
    <property type="term" value="F:sequence-specific DNA binding"/>
    <property type="evidence" value="ECO:0007669"/>
    <property type="project" value="InterPro"/>
</dbReference>
<dbReference type="FunFam" id="1.10.10.60:FF:000006">
    <property type="entry name" value="DNA-binding protein Fis"/>
    <property type="match status" value="1"/>
</dbReference>
<dbReference type="Gene3D" id="1.10.10.60">
    <property type="entry name" value="Homeodomain-like"/>
    <property type="match status" value="1"/>
</dbReference>
<dbReference type="HAMAP" id="MF_00166">
    <property type="entry name" value="DNA_binding_Fis"/>
    <property type="match status" value="1"/>
</dbReference>
<dbReference type="InterPro" id="IPR005412">
    <property type="entry name" value="Fis_DNA-bd"/>
</dbReference>
<dbReference type="InterPro" id="IPR009057">
    <property type="entry name" value="Homeodomain-like_sf"/>
</dbReference>
<dbReference type="InterPro" id="IPR002197">
    <property type="entry name" value="HTH_Fis"/>
</dbReference>
<dbReference type="InterPro" id="IPR050207">
    <property type="entry name" value="Trans_regulatory_Fis"/>
</dbReference>
<dbReference type="NCBIfam" id="NF001659">
    <property type="entry name" value="PRK00430.1"/>
    <property type="match status" value="1"/>
</dbReference>
<dbReference type="PANTHER" id="PTHR47918">
    <property type="entry name" value="DNA-BINDING PROTEIN FIS"/>
    <property type="match status" value="1"/>
</dbReference>
<dbReference type="PANTHER" id="PTHR47918:SF1">
    <property type="entry name" value="DNA-BINDING PROTEIN FIS"/>
    <property type="match status" value="1"/>
</dbReference>
<dbReference type="Pfam" id="PF02954">
    <property type="entry name" value="HTH_8"/>
    <property type="match status" value="1"/>
</dbReference>
<dbReference type="PIRSF" id="PIRSF002097">
    <property type="entry name" value="DNA-binding_Fis"/>
    <property type="match status" value="1"/>
</dbReference>
<dbReference type="PRINTS" id="PR01591">
    <property type="entry name" value="DNABINDNGFIS"/>
</dbReference>
<dbReference type="PRINTS" id="PR01590">
    <property type="entry name" value="HTHFIS"/>
</dbReference>
<dbReference type="SUPFAM" id="SSF46689">
    <property type="entry name" value="Homeodomain-like"/>
    <property type="match status" value="1"/>
</dbReference>
<organism>
    <name type="scientific">Aliivibrio fischeri (strain ATCC 700601 / ES114)</name>
    <name type="common">Vibrio fischeri</name>
    <dbReference type="NCBI Taxonomy" id="312309"/>
    <lineage>
        <taxon>Bacteria</taxon>
        <taxon>Pseudomonadati</taxon>
        <taxon>Pseudomonadota</taxon>
        <taxon>Gammaproteobacteria</taxon>
        <taxon>Vibrionales</taxon>
        <taxon>Vibrionaceae</taxon>
        <taxon>Aliivibrio</taxon>
    </lineage>
</organism>
<proteinExistence type="inferred from homology"/>
<name>FIS_ALIF1</name>
<comment type="function">
    <text evidence="1">Activates ribosomal RNA transcription. Plays a direct role in upstream activation of rRNA promoters.</text>
</comment>
<comment type="subunit">
    <text evidence="1">Homodimer.</text>
</comment>
<comment type="similarity">
    <text evidence="1">Belongs to the transcriptional regulatory Fis family.</text>
</comment>
<comment type="sequence caution" evidence="2">
    <conflict type="erroneous initiation">
        <sequence resource="EMBL-CDS" id="AAW86886"/>
    </conflict>
</comment>
<protein>
    <recommendedName>
        <fullName evidence="1">DNA-binding protein Fis</fullName>
    </recommendedName>
</protein>
<accession>Q5E260</accession>